<accession>Q6AQF1</accession>
<name>PRMA_DESPS</name>
<dbReference type="EC" id="2.1.1.-" evidence="1"/>
<dbReference type="EMBL" id="CR522870">
    <property type="protein sequence ID" value="CAG35422.1"/>
    <property type="molecule type" value="Genomic_DNA"/>
</dbReference>
<dbReference type="RefSeq" id="WP_011187938.1">
    <property type="nucleotide sequence ID" value="NC_006138.1"/>
</dbReference>
<dbReference type="SMR" id="Q6AQF1"/>
<dbReference type="STRING" id="177439.DP0693"/>
<dbReference type="KEGG" id="dps:DP0693"/>
<dbReference type="eggNOG" id="COG2264">
    <property type="taxonomic scope" value="Bacteria"/>
</dbReference>
<dbReference type="HOGENOM" id="CLU_049382_0_1_7"/>
<dbReference type="Proteomes" id="UP000000602">
    <property type="component" value="Chromosome"/>
</dbReference>
<dbReference type="GO" id="GO:0005737">
    <property type="term" value="C:cytoplasm"/>
    <property type="evidence" value="ECO:0007669"/>
    <property type="project" value="UniProtKB-SubCell"/>
</dbReference>
<dbReference type="GO" id="GO:0016279">
    <property type="term" value="F:protein-lysine N-methyltransferase activity"/>
    <property type="evidence" value="ECO:0007669"/>
    <property type="project" value="RHEA"/>
</dbReference>
<dbReference type="GO" id="GO:0032259">
    <property type="term" value="P:methylation"/>
    <property type="evidence" value="ECO:0007669"/>
    <property type="project" value="UniProtKB-KW"/>
</dbReference>
<dbReference type="CDD" id="cd02440">
    <property type="entry name" value="AdoMet_MTases"/>
    <property type="match status" value="1"/>
</dbReference>
<dbReference type="Gene3D" id="3.40.50.150">
    <property type="entry name" value="Vaccinia Virus protein VP39"/>
    <property type="match status" value="1"/>
</dbReference>
<dbReference type="HAMAP" id="MF_00735">
    <property type="entry name" value="Methyltr_PrmA"/>
    <property type="match status" value="1"/>
</dbReference>
<dbReference type="InterPro" id="IPR050078">
    <property type="entry name" value="Ribosomal_L11_MeTrfase_PrmA"/>
</dbReference>
<dbReference type="InterPro" id="IPR004498">
    <property type="entry name" value="Ribosomal_PrmA_MeTrfase"/>
</dbReference>
<dbReference type="InterPro" id="IPR029063">
    <property type="entry name" value="SAM-dependent_MTases_sf"/>
</dbReference>
<dbReference type="NCBIfam" id="TIGR00406">
    <property type="entry name" value="prmA"/>
    <property type="match status" value="1"/>
</dbReference>
<dbReference type="PANTHER" id="PTHR43648">
    <property type="entry name" value="ELECTRON TRANSFER FLAVOPROTEIN BETA SUBUNIT LYSINE METHYLTRANSFERASE"/>
    <property type="match status" value="1"/>
</dbReference>
<dbReference type="PANTHER" id="PTHR43648:SF1">
    <property type="entry name" value="ELECTRON TRANSFER FLAVOPROTEIN BETA SUBUNIT LYSINE METHYLTRANSFERASE"/>
    <property type="match status" value="1"/>
</dbReference>
<dbReference type="Pfam" id="PF06325">
    <property type="entry name" value="PrmA"/>
    <property type="match status" value="1"/>
</dbReference>
<dbReference type="PIRSF" id="PIRSF000401">
    <property type="entry name" value="RPL11_MTase"/>
    <property type="match status" value="1"/>
</dbReference>
<dbReference type="SUPFAM" id="SSF53335">
    <property type="entry name" value="S-adenosyl-L-methionine-dependent methyltransferases"/>
    <property type="match status" value="1"/>
</dbReference>
<proteinExistence type="inferred from homology"/>
<reference key="1">
    <citation type="journal article" date="2004" name="Environ. Microbiol.">
        <title>The genome of Desulfotalea psychrophila, a sulfate-reducing bacterium from permanently cold Arctic sediments.</title>
        <authorList>
            <person name="Rabus R."/>
            <person name="Ruepp A."/>
            <person name="Frickey T."/>
            <person name="Rattei T."/>
            <person name="Fartmann B."/>
            <person name="Stark M."/>
            <person name="Bauer M."/>
            <person name="Zibat A."/>
            <person name="Lombardot T."/>
            <person name="Becker I."/>
            <person name="Amann J."/>
            <person name="Gellner K."/>
            <person name="Teeling H."/>
            <person name="Leuschner W.D."/>
            <person name="Gloeckner F.-O."/>
            <person name="Lupas A.N."/>
            <person name="Amann R."/>
            <person name="Klenk H.-P."/>
        </authorList>
    </citation>
    <scope>NUCLEOTIDE SEQUENCE [LARGE SCALE GENOMIC DNA]</scope>
    <source>
        <strain>DSM 12343 / LSv54</strain>
    </source>
</reference>
<feature type="chain" id="PRO_0000192256" description="Ribosomal protein L11 methyltransferase">
    <location>
        <begin position="1"/>
        <end position="300"/>
    </location>
</feature>
<feature type="binding site" evidence="1">
    <location>
        <position position="148"/>
    </location>
    <ligand>
        <name>S-adenosyl-L-methionine</name>
        <dbReference type="ChEBI" id="CHEBI:59789"/>
    </ligand>
</feature>
<feature type="binding site" evidence="1">
    <location>
        <position position="171"/>
    </location>
    <ligand>
        <name>S-adenosyl-L-methionine</name>
        <dbReference type="ChEBI" id="CHEBI:59789"/>
    </ligand>
</feature>
<feature type="binding site" evidence="1">
    <location>
        <position position="193"/>
    </location>
    <ligand>
        <name>S-adenosyl-L-methionine</name>
        <dbReference type="ChEBI" id="CHEBI:59789"/>
    </ligand>
</feature>
<feature type="binding site" evidence="1">
    <location>
        <position position="235"/>
    </location>
    <ligand>
        <name>S-adenosyl-L-methionine</name>
        <dbReference type="ChEBI" id="CHEBI:59789"/>
    </ligand>
</feature>
<gene>
    <name evidence="1" type="primary">prmA</name>
    <name type="ordered locus">DP0693</name>
</gene>
<evidence type="ECO:0000255" key="1">
    <source>
        <dbReference type="HAMAP-Rule" id="MF_00735"/>
    </source>
</evidence>
<protein>
    <recommendedName>
        <fullName evidence="1">Ribosomal protein L11 methyltransferase</fullName>
        <shortName evidence="1">L11 Mtase</shortName>
        <ecNumber evidence="1">2.1.1.-</ecNumber>
    </recommendedName>
</protein>
<keyword id="KW-0963">Cytoplasm</keyword>
<keyword id="KW-0489">Methyltransferase</keyword>
<keyword id="KW-1185">Reference proteome</keyword>
<keyword id="KW-0949">S-adenosyl-L-methionine</keyword>
<keyword id="KW-0808">Transferase</keyword>
<comment type="function">
    <text evidence="1">Methylates ribosomal protein L11.</text>
</comment>
<comment type="catalytic activity">
    <reaction evidence="1">
        <text>L-lysyl-[protein] + 3 S-adenosyl-L-methionine = N(6),N(6),N(6)-trimethyl-L-lysyl-[protein] + 3 S-adenosyl-L-homocysteine + 3 H(+)</text>
        <dbReference type="Rhea" id="RHEA:54192"/>
        <dbReference type="Rhea" id="RHEA-COMP:9752"/>
        <dbReference type="Rhea" id="RHEA-COMP:13826"/>
        <dbReference type="ChEBI" id="CHEBI:15378"/>
        <dbReference type="ChEBI" id="CHEBI:29969"/>
        <dbReference type="ChEBI" id="CHEBI:57856"/>
        <dbReference type="ChEBI" id="CHEBI:59789"/>
        <dbReference type="ChEBI" id="CHEBI:61961"/>
    </reaction>
</comment>
<comment type="subcellular location">
    <subcellularLocation>
        <location evidence="1">Cytoplasm</location>
    </subcellularLocation>
</comment>
<comment type="similarity">
    <text evidence="1">Belongs to the methyltransferase superfamily. PrmA family.</text>
</comment>
<sequence length="300" mass="32623">MHTMKKWLKISIEANPLMVEVVSDYLVGIHGAGVDLAADKDENPAGQIVAFIEQAELSTADAEKCATQISVFLAEMAAVFNVASPSLVWEFLEEEDWSKNWKEHFVPFTIVPGLIIAPTWENYEAQGDELVIEMDPGMAFGTGHHATTSLSLSYLQDVVTQRGAKTVLDVGCGTGILVMGAVLFGAERGLGIDNCPDAVAAASNNVVHNHLAEKIDIGITPLSELREEYDLVVANIIHDVLASMVLELYSRVKKEGHLILSGLLADQQVDSIIEIFAREGFVLLEKGIEGEWGAVLLQKR</sequence>
<organism>
    <name type="scientific">Desulfotalea psychrophila (strain LSv54 / DSM 12343)</name>
    <dbReference type="NCBI Taxonomy" id="177439"/>
    <lineage>
        <taxon>Bacteria</taxon>
        <taxon>Pseudomonadati</taxon>
        <taxon>Thermodesulfobacteriota</taxon>
        <taxon>Desulfobulbia</taxon>
        <taxon>Desulfobulbales</taxon>
        <taxon>Desulfocapsaceae</taxon>
        <taxon>Desulfotalea</taxon>
    </lineage>
</organism>